<proteinExistence type="predicted"/>
<comment type="subcellular location">
    <subcellularLocation>
        <location evidence="2">Cell membrane</location>
        <topology evidence="2">Multi-pass membrane protein</topology>
    </subcellularLocation>
</comment>
<gene>
    <name type="primary">ynaJ</name>
    <name type="ordered locus">Z2436</name>
    <name type="ordered locus">ECs1913</name>
</gene>
<keyword id="KW-1003">Cell membrane</keyword>
<keyword id="KW-0472">Membrane</keyword>
<keyword id="KW-1185">Reference proteome</keyword>
<keyword id="KW-0812">Transmembrane</keyword>
<keyword id="KW-1133">Transmembrane helix</keyword>
<protein>
    <recommendedName>
        <fullName>Uncharacterized protein YnaJ</fullName>
    </recommendedName>
</protein>
<organism>
    <name type="scientific">Escherichia coli O157:H7</name>
    <dbReference type="NCBI Taxonomy" id="83334"/>
    <lineage>
        <taxon>Bacteria</taxon>
        <taxon>Pseudomonadati</taxon>
        <taxon>Pseudomonadota</taxon>
        <taxon>Gammaproteobacteria</taxon>
        <taxon>Enterobacterales</taxon>
        <taxon>Enterobacteriaceae</taxon>
        <taxon>Escherichia</taxon>
    </lineage>
</organism>
<sequence length="85" mass="9339">MIMAKLKSAKGKKFLFGLLAVFIIAASVVTRATIGGVIEQYNIPLSEWTTSMYVIQSSMIFVYSLVFTVLLAIPLGIYFLGGEEQ</sequence>
<feature type="chain" id="PRO_0000168917" description="Uncharacterized protein YnaJ">
    <location>
        <begin position="1"/>
        <end position="85"/>
    </location>
</feature>
<feature type="transmembrane region" description="Helical" evidence="1">
    <location>
        <begin position="14"/>
        <end position="34"/>
    </location>
</feature>
<feature type="transmembrane region" description="Helical" evidence="1">
    <location>
        <begin position="60"/>
        <end position="80"/>
    </location>
</feature>
<name>YNAJ_ECO57</name>
<accession>P64447</accession>
<accession>P76050</accession>
<evidence type="ECO:0000255" key="1"/>
<evidence type="ECO:0000305" key="2"/>
<dbReference type="EMBL" id="AE005174">
    <property type="protein sequence ID" value="AAG56468.1"/>
    <property type="molecule type" value="Genomic_DNA"/>
</dbReference>
<dbReference type="EMBL" id="BA000007">
    <property type="protein sequence ID" value="BAB35336.1"/>
    <property type="molecule type" value="Genomic_DNA"/>
</dbReference>
<dbReference type="PIR" id="A90868">
    <property type="entry name" value="A90868"/>
</dbReference>
<dbReference type="PIR" id="H85750">
    <property type="entry name" value="H85750"/>
</dbReference>
<dbReference type="RefSeq" id="NP_309940.1">
    <property type="nucleotide sequence ID" value="NC_002695.1"/>
</dbReference>
<dbReference type="RefSeq" id="WP_000605090.1">
    <property type="nucleotide sequence ID" value="NZ_VOAI01000015.1"/>
</dbReference>
<dbReference type="SMR" id="P64447"/>
<dbReference type="STRING" id="155864.Z2436"/>
<dbReference type="GeneID" id="912396"/>
<dbReference type="KEGG" id="ece:Z2436"/>
<dbReference type="KEGG" id="ecs:ECs_1913"/>
<dbReference type="PATRIC" id="fig|386585.9.peg.2019"/>
<dbReference type="eggNOG" id="COG3182">
    <property type="taxonomic scope" value="Bacteria"/>
</dbReference>
<dbReference type="HOGENOM" id="CLU_168864_0_0_6"/>
<dbReference type="OMA" id="QSAMICV"/>
<dbReference type="Proteomes" id="UP000000558">
    <property type="component" value="Chromosome"/>
</dbReference>
<dbReference type="Proteomes" id="UP000002519">
    <property type="component" value="Chromosome"/>
</dbReference>
<dbReference type="GO" id="GO:0005886">
    <property type="term" value="C:plasma membrane"/>
    <property type="evidence" value="ECO:0007669"/>
    <property type="project" value="UniProtKB-SubCell"/>
</dbReference>
<dbReference type="InterPro" id="IPR019685">
    <property type="entry name" value="DUF2534"/>
</dbReference>
<dbReference type="Pfam" id="PF10749">
    <property type="entry name" value="DUF2534"/>
    <property type="match status" value="1"/>
</dbReference>
<reference key="1">
    <citation type="journal article" date="2001" name="Nature">
        <title>Genome sequence of enterohaemorrhagic Escherichia coli O157:H7.</title>
        <authorList>
            <person name="Perna N.T."/>
            <person name="Plunkett G. III"/>
            <person name="Burland V."/>
            <person name="Mau B."/>
            <person name="Glasner J.D."/>
            <person name="Rose D.J."/>
            <person name="Mayhew G.F."/>
            <person name="Evans P.S."/>
            <person name="Gregor J."/>
            <person name="Kirkpatrick H.A."/>
            <person name="Posfai G."/>
            <person name="Hackett J."/>
            <person name="Klink S."/>
            <person name="Boutin A."/>
            <person name="Shao Y."/>
            <person name="Miller L."/>
            <person name="Grotbeck E.J."/>
            <person name="Davis N.W."/>
            <person name="Lim A."/>
            <person name="Dimalanta E.T."/>
            <person name="Potamousis K."/>
            <person name="Apodaca J."/>
            <person name="Anantharaman T.S."/>
            <person name="Lin J."/>
            <person name="Yen G."/>
            <person name="Schwartz D.C."/>
            <person name="Welch R.A."/>
            <person name="Blattner F.R."/>
        </authorList>
    </citation>
    <scope>NUCLEOTIDE SEQUENCE [LARGE SCALE GENOMIC DNA]</scope>
    <source>
        <strain>O157:H7 / EDL933 / ATCC 700927 / EHEC</strain>
    </source>
</reference>
<reference key="2">
    <citation type="journal article" date="2001" name="DNA Res.">
        <title>Complete genome sequence of enterohemorrhagic Escherichia coli O157:H7 and genomic comparison with a laboratory strain K-12.</title>
        <authorList>
            <person name="Hayashi T."/>
            <person name="Makino K."/>
            <person name="Ohnishi M."/>
            <person name="Kurokawa K."/>
            <person name="Ishii K."/>
            <person name="Yokoyama K."/>
            <person name="Han C.-G."/>
            <person name="Ohtsubo E."/>
            <person name="Nakayama K."/>
            <person name="Murata T."/>
            <person name="Tanaka M."/>
            <person name="Tobe T."/>
            <person name="Iida T."/>
            <person name="Takami H."/>
            <person name="Honda T."/>
            <person name="Sasakawa C."/>
            <person name="Ogasawara N."/>
            <person name="Yasunaga T."/>
            <person name="Kuhara S."/>
            <person name="Shiba T."/>
            <person name="Hattori M."/>
            <person name="Shinagawa H."/>
        </authorList>
    </citation>
    <scope>NUCLEOTIDE SEQUENCE [LARGE SCALE GENOMIC DNA]</scope>
    <source>
        <strain>O157:H7 / Sakai / RIMD 0509952 / EHEC</strain>
    </source>
</reference>